<feature type="chain" id="PRO_0000309851" description="Non-structural protein 1">
    <location>
        <begin position="1"/>
        <end position="230"/>
    </location>
</feature>
<feature type="region of interest" description="RNA-binding and homodimerization" evidence="1">
    <location>
        <begin position="1"/>
        <end position="73"/>
    </location>
</feature>
<feature type="region of interest" description="CPSF4-binding" evidence="1">
    <location>
        <begin position="180"/>
        <end position="215"/>
    </location>
</feature>
<feature type="region of interest" description="Disordered" evidence="2">
    <location>
        <begin position="205"/>
        <end position="230"/>
    </location>
</feature>
<feature type="region of interest" description="PABPN1-binding" evidence="1">
    <location>
        <begin position="223"/>
        <end position="230"/>
    </location>
</feature>
<feature type="short sequence motif" description="Nuclear localization signal" evidence="1">
    <location>
        <begin position="34"/>
        <end position="38"/>
    </location>
</feature>
<feature type="short sequence motif" description="Nuclear export signal" evidence="1">
    <location>
        <begin position="137"/>
        <end position="146"/>
    </location>
</feature>
<name>NS1_I59A0</name>
<sequence length="230" mass="26023">MDSNTVSSFQVDCFLWHVRKRFADQELGDAPFLDRLRRDQKSLRGRGSTLGLDIETATRAGKQIVERILEEESDEALKMTIASVPASRYLTDMTLEEMSRDWFMLMPKQKVAGSLCIRMDQAIMDKNIILKANFSVISDRLETLILLRAFTEEGAIVGEISPLPSLPGHTDEDVKNAIGVLIGGLEWNDNTVRVSETLQRFAWRSSNEDGRPPLPPKQKRKMARTIESEV</sequence>
<comment type="function">
    <text evidence="1">Inhibits post-transcriptional processing of cellular pre-mRNA, by binding and inhibiting two cellular proteins that are required for the 3'-end processing of cellular pre-mRNAs: the 30 kDa cleavage and polyadenylation specificity factor/CPSF4 and the poly(A)-binding protein 2/PABPN1. In turn, unprocessed 3' end pre-mRNAs accumulate in the host nucleus and are no longer exported to the cytoplasm. Cellular protein synthesis is thereby shut off very early after virus infection. Viral protein synthesis is not affected by the inhibition of the cellular 3' end processing machinery because the poly(A) tails of viral mRNAs are produced by the viral polymerase through a stuttering mechanism. Prevents the establishment of the cellular antiviral state by inhibiting TRIM25-mediated RIGI ubiquitination, which normally triggers the antiviral transduction signal that leads to the activation of type I IFN genes by transcription factors IRF3 and IRF7. Also binds poly(A) and U6 snRNA. Inhibits the integrated stress response (ISR) in the infected cell by blocking dsRNA binding by EIF2AK2/PKR and further phosphorylation of EIF2S1/EIF-2ALPHA. Stress granule formation is thus inhibited, which allows protein synthesis and viral replication.</text>
</comment>
<comment type="subunit">
    <text evidence="1">Homodimer. Interacts with host TRIM25 (via coiled coil); this interaction specifically inhibits TRIM25 multimerization and TRIM25-mediated RIGI CARD ubiquitination. Interacts with human EIF2AK2/PKR, CPSF4, IVNS1ABP and PABPN1.</text>
</comment>
<comment type="subcellular location">
    <subcellularLocation>
        <location evidence="1">Host nucleus</location>
    </subcellularLocation>
    <subcellularLocation>
        <location evidence="1">Host cytoplasm</location>
    </subcellularLocation>
    <text evidence="1">In uninfected, transfected cells, NS1 is localized in the nucleus. Only in virus infected cells, the nuclear export signal is unveiled, presumably by a viral protein, and a fraction of NS1 is exported in the cytoplasm.</text>
</comment>
<comment type="alternative products">
    <event type="alternative splicing"/>
    <isoform>
        <id>Q0A2H0-1</id>
        <name>NS1</name>
        <sequence type="displayed"/>
    </isoform>
    <isoform>
        <id>Q0A2H1-1</id>
        <name>NEP</name>
        <name>NS2</name>
        <sequence type="external"/>
    </isoform>
</comment>
<comment type="domain">
    <text evidence="1">The dsRNA-binding region is required for suppression of RNA silencing.</text>
</comment>
<comment type="PTM">
    <text evidence="1">Upon interferon induction, ISGylated via host HERC5; this results in the impairment of NS1 interaction with RNA targets due to its inability to form homodimers and to interact with host EIF2AK2/PKR.</text>
</comment>
<comment type="similarity">
    <text evidence="1">Belongs to the influenza A viruses NS1 family.</text>
</comment>
<gene>
    <name evidence="1" type="primary">NS</name>
</gene>
<organismHost>
    <name type="scientific">Aves</name>
    <dbReference type="NCBI Taxonomy" id="8782"/>
</organismHost>
<organismHost>
    <name type="scientific">Felis catus</name>
    <name type="common">Cat</name>
    <name type="synonym">Felis silvestris catus</name>
    <dbReference type="NCBI Taxonomy" id="9685"/>
</organismHost>
<organismHost>
    <name type="scientific">Homo sapiens</name>
    <name type="common">Human</name>
    <dbReference type="NCBI Taxonomy" id="9606"/>
</organismHost>
<organismHost>
    <name type="scientific">Panthera pardus</name>
    <name type="common">Leopard</name>
    <name type="synonym">Felis pardus</name>
    <dbReference type="NCBI Taxonomy" id="9691"/>
</organismHost>
<organismHost>
    <name type="scientific">Panthera tigris</name>
    <name type="common">Tiger</name>
    <dbReference type="NCBI Taxonomy" id="9694"/>
</organismHost>
<organismHost>
    <name type="scientific">Sus scrofa</name>
    <name type="common">Pig</name>
    <dbReference type="NCBI Taxonomy" id="9823"/>
</organismHost>
<protein>
    <recommendedName>
        <fullName evidence="1">Non-structural protein 1</fullName>
        <shortName evidence="1">NS1</shortName>
    </recommendedName>
    <alternativeName>
        <fullName evidence="1">NS1A</fullName>
    </alternativeName>
</protein>
<accession>Q0A2H0</accession>
<proteinExistence type="inferred from homology"/>
<dbReference type="EMBL" id="CY015085">
    <property type="protein sequence ID" value="ABI85111.1"/>
    <property type="molecule type" value="Genomic_RNA"/>
</dbReference>
<dbReference type="SMR" id="Q0A2H0"/>
<dbReference type="IntAct" id="Q0A2H0">
    <property type="interactions" value="41"/>
</dbReference>
<dbReference type="MINT" id="Q0A2H0"/>
<dbReference type="Proteomes" id="UP000169634">
    <property type="component" value="Genome"/>
</dbReference>
<dbReference type="GO" id="GO:0030430">
    <property type="term" value="C:host cell cytoplasm"/>
    <property type="evidence" value="ECO:0007669"/>
    <property type="project" value="UniProtKB-SubCell"/>
</dbReference>
<dbReference type="GO" id="GO:0042025">
    <property type="term" value="C:host cell nucleus"/>
    <property type="evidence" value="ECO:0007669"/>
    <property type="project" value="UniProtKB-SubCell"/>
</dbReference>
<dbReference type="GO" id="GO:0030291">
    <property type="term" value="F:protein serine/threonine kinase inhibitor activity"/>
    <property type="evidence" value="ECO:0007669"/>
    <property type="project" value="UniProtKB-KW"/>
</dbReference>
<dbReference type="GO" id="GO:0003723">
    <property type="term" value="F:RNA binding"/>
    <property type="evidence" value="ECO:0007669"/>
    <property type="project" value="UniProtKB-KW"/>
</dbReference>
<dbReference type="GO" id="GO:0039540">
    <property type="term" value="P:symbiont-mediated suppression of host cytoplasmic pattern recognition receptor signaling pathway via inhibition of RIG-I activity"/>
    <property type="evidence" value="ECO:0007669"/>
    <property type="project" value="UniProtKB-KW"/>
</dbReference>
<dbReference type="GO" id="GO:0039657">
    <property type="term" value="P:symbiont-mediated suppression of host gene expression"/>
    <property type="evidence" value="ECO:0007669"/>
    <property type="project" value="UniProtKB-KW"/>
</dbReference>
<dbReference type="GO" id="GO:0039524">
    <property type="term" value="P:symbiont-mediated suppression of host mRNA processing"/>
    <property type="evidence" value="ECO:0007669"/>
    <property type="project" value="UniProtKB-KW"/>
</dbReference>
<dbReference type="GO" id="GO:0039580">
    <property type="term" value="P:symbiont-mediated suppression of host PKR/eIFalpha signaling"/>
    <property type="evidence" value="ECO:0007669"/>
    <property type="project" value="UniProtKB-KW"/>
</dbReference>
<dbReference type="GO" id="GO:0039502">
    <property type="term" value="P:symbiont-mediated suppression of host type I interferon-mediated signaling pathway"/>
    <property type="evidence" value="ECO:0007669"/>
    <property type="project" value="UniProtKB-KW"/>
</dbReference>
<dbReference type="FunFam" id="1.10.287.10:FF:000001">
    <property type="entry name" value="Non-structural protein 1"/>
    <property type="match status" value="1"/>
</dbReference>
<dbReference type="FunFam" id="3.30.420.330:FF:000001">
    <property type="entry name" value="Non-structural protein 1"/>
    <property type="match status" value="1"/>
</dbReference>
<dbReference type="Gene3D" id="3.30.420.330">
    <property type="entry name" value="Influenza virus non-structural protein, effector domain"/>
    <property type="match status" value="1"/>
</dbReference>
<dbReference type="Gene3D" id="1.10.287.10">
    <property type="entry name" value="S15/NS1, RNA-binding"/>
    <property type="match status" value="1"/>
</dbReference>
<dbReference type="HAMAP" id="MF_04066">
    <property type="entry name" value="INFV_NS1"/>
    <property type="match status" value="1"/>
</dbReference>
<dbReference type="InterPro" id="IPR004208">
    <property type="entry name" value="NS1"/>
</dbReference>
<dbReference type="InterPro" id="IPR000256">
    <property type="entry name" value="NS1A"/>
</dbReference>
<dbReference type="InterPro" id="IPR038064">
    <property type="entry name" value="NS1A_effect_dom-like_sf"/>
</dbReference>
<dbReference type="InterPro" id="IPR009068">
    <property type="entry name" value="uS15_NS1_RNA-bd_sf"/>
</dbReference>
<dbReference type="Pfam" id="PF00600">
    <property type="entry name" value="Flu_NS1"/>
    <property type="match status" value="1"/>
</dbReference>
<dbReference type="SUPFAM" id="SSF143021">
    <property type="entry name" value="Ns1 effector domain-like"/>
    <property type="match status" value="1"/>
</dbReference>
<dbReference type="SUPFAM" id="SSF47060">
    <property type="entry name" value="S15/NS1 RNA-binding domain"/>
    <property type="match status" value="1"/>
</dbReference>
<reference key="1">
    <citation type="journal article" date="2006" name="Science">
        <title>Large-scale sequence analysis of avian influenza isolates.</title>
        <authorList>
            <person name="Obenauer J.C."/>
            <person name="Denson J."/>
            <person name="Mehta P.K."/>
            <person name="Su X."/>
            <person name="Mukatira S."/>
            <person name="Finkelstein D.B."/>
            <person name="Xu X."/>
            <person name="Wang J."/>
            <person name="Ma J."/>
            <person name="Fan Y."/>
            <person name="Rakestraw K.M."/>
            <person name="Webster R.G."/>
            <person name="Hoffmann E."/>
            <person name="Krauss S."/>
            <person name="Zheng J."/>
            <person name="Zhang Z."/>
            <person name="Naeve C.W."/>
        </authorList>
    </citation>
    <scope>NUCLEOTIDE SEQUENCE [GENOMIC RNA]</scope>
</reference>
<organism>
    <name type="scientific">Influenza A virus (strain A/Chicken/Scotland/1959 H5N1)</name>
    <dbReference type="NCBI Taxonomy" id="402527"/>
    <lineage>
        <taxon>Viruses</taxon>
        <taxon>Riboviria</taxon>
        <taxon>Orthornavirae</taxon>
        <taxon>Negarnaviricota</taxon>
        <taxon>Polyploviricotina</taxon>
        <taxon>Insthoviricetes</taxon>
        <taxon>Articulavirales</taxon>
        <taxon>Orthomyxoviridae</taxon>
        <taxon>Alphainfluenzavirus</taxon>
        <taxon>Alphainfluenzavirus influenzae</taxon>
        <taxon>Influenza A virus</taxon>
    </lineage>
</organism>
<evidence type="ECO:0000255" key="1">
    <source>
        <dbReference type="HAMAP-Rule" id="MF_04066"/>
    </source>
</evidence>
<evidence type="ECO:0000256" key="2">
    <source>
        <dbReference type="SAM" id="MobiDB-lite"/>
    </source>
</evidence>
<keyword id="KW-0025">Alternative splicing</keyword>
<keyword id="KW-1262">Eukaryotic host gene expression shutoff by virus</keyword>
<keyword id="KW-1035">Host cytoplasm</keyword>
<keyword id="KW-1190">Host gene expression shutoff by virus</keyword>
<keyword id="KW-1192">Host mRNA suppression by virus</keyword>
<keyword id="KW-1048">Host nucleus</keyword>
<keyword id="KW-0945">Host-virus interaction</keyword>
<keyword id="KW-1090">Inhibition of host innate immune response by virus</keyword>
<keyword id="KW-1114">Inhibition of host interferon signaling pathway by virus</keyword>
<keyword id="KW-1102">Inhibition of host PKR by virus</keyword>
<keyword id="KW-1103">Inhibition of host pre-mRNA processing by virus</keyword>
<keyword id="KW-1088">Inhibition of host RIG-I by virus</keyword>
<keyword id="KW-1113">Inhibition of host RLR pathway by virus</keyword>
<keyword id="KW-0922">Interferon antiviral system evasion</keyword>
<keyword id="KW-0694">RNA-binding</keyword>
<keyword id="KW-0832">Ubl conjugation</keyword>
<keyword id="KW-0899">Viral immunoevasion</keyword>